<keyword id="KW-0963">Cytoplasm</keyword>
<keyword id="KW-0378">Hydrolase</keyword>
<keyword id="KW-1185">Reference proteome</keyword>
<keyword id="KW-0694">RNA-binding</keyword>
<keyword id="KW-0820">tRNA-binding</keyword>
<protein>
    <recommendedName>
        <fullName evidence="1">D-aminoacyl-tRNA deacylase</fullName>
        <shortName evidence="1">DTD</shortName>
        <ecNumber evidence="1">3.1.1.96</ecNumber>
    </recommendedName>
    <alternativeName>
        <fullName evidence="1">Gly-tRNA(Ala) deacylase</fullName>
    </alternativeName>
</protein>
<feature type="chain" id="PRO_0000259259" description="D-aminoacyl-tRNA deacylase">
    <location>
        <begin position="1"/>
        <end position="149"/>
    </location>
</feature>
<feature type="short sequence motif" description="Gly-cisPro motif, important for rejection of L-amino acids" evidence="1">
    <location>
        <begin position="137"/>
        <end position="138"/>
    </location>
</feature>
<accession>Q1IHZ8</accession>
<organism>
    <name type="scientific">Koribacter versatilis (strain Ellin345)</name>
    <dbReference type="NCBI Taxonomy" id="204669"/>
    <lineage>
        <taxon>Bacteria</taxon>
        <taxon>Pseudomonadati</taxon>
        <taxon>Acidobacteriota</taxon>
        <taxon>Terriglobia</taxon>
        <taxon>Terriglobales</taxon>
        <taxon>Candidatus Korobacteraceae</taxon>
        <taxon>Candidatus Korobacter</taxon>
    </lineage>
</organism>
<sequence length="149" mass="16408">MRTVVQRVSRASVTVEGRISGAIERGLLVLLGVGQDDAESEAEYLAEKIAGLRIFEDENEKMNLSVVDVGGAVLAVSQFTLYGDVRKGKRPSFDAAARPERAKELYEYFVAQIRAKGLRCETGVFQAMMHVELVNDGPVTILLDSKKEF</sequence>
<gene>
    <name evidence="1" type="primary">dtd</name>
    <name type="ordered locus">Acid345_4502</name>
</gene>
<proteinExistence type="inferred from homology"/>
<evidence type="ECO:0000255" key="1">
    <source>
        <dbReference type="HAMAP-Rule" id="MF_00518"/>
    </source>
</evidence>
<evidence type="ECO:0000305" key="2"/>
<name>DTD_KORVE</name>
<comment type="function">
    <text evidence="1">An aminoacyl-tRNA editing enzyme that deacylates mischarged D-aminoacyl-tRNAs. Also deacylates mischarged glycyl-tRNA(Ala), protecting cells against glycine mischarging by AlaRS. Acts via tRNA-based rather than protein-based catalysis; rejects L-amino acids rather than detecting D-amino acids in the active site. By recycling D-aminoacyl-tRNA to D-amino acids and free tRNA molecules, this enzyme counteracts the toxicity associated with the formation of D-aminoacyl-tRNA entities in vivo and helps enforce protein L-homochirality.</text>
</comment>
<comment type="catalytic activity">
    <reaction evidence="1">
        <text>glycyl-tRNA(Ala) + H2O = tRNA(Ala) + glycine + H(+)</text>
        <dbReference type="Rhea" id="RHEA:53744"/>
        <dbReference type="Rhea" id="RHEA-COMP:9657"/>
        <dbReference type="Rhea" id="RHEA-COMP:13640"/>
        <dbReference type="ChEBI" id="CHEBI:15377"/>
        <dbReference type="ChEBI" id="CHEBI:15378"/>
        <dbReference type="ChEBI" id="CHEBI:57305"/>
        <dbReference type="ChEBI" id="CHEBI:78442"/>
        <dbReference type="ChEBI" id="CHEBI:78522"/>
        <dbReference type="EC" id="3.1.1.96"/>
    </reaction>
</comment>
<comment type="catalytic activity">
    <reaction evidence="1">
        <text>a D-aminoacyl-tRNA + H2O = a tRNA + a D-alpha-amino acid + H(+)</text>
        <dbReference type="Rhea" id="RHEA:13953"/>
        <dbReference type="Rhea" id="RHEA-COMP:10123"/>
        <dbReference type="Rhea" id="RHEA-COMP:10124"/>
        <dbReference type="ChEBI" id="CHEBI:15377"/>
        <dbReference type="ChEBI" id="CHEBI:15378"/>
        <dbReference type="ChEBI" id="CHEBI:59871"/>
        <dbReference type="ChEBI" id="CHEBI:78442"/>
        <dbReference type="ChEBI" id="CHEBI:79333"/>
        <dbReference type="EC" id="3.1.1.96"/>
    </reaction>
</comment>
<comment type="subunit">
    <text evidence="1">Homodimer.</text>
</comment>
<comment type="subcellular location">
    <subcellularLocation>
        <location evidence="1">Cytoplasm</location>
    </subcellularLocation>
</comment>
<comment type="domain">
    <text evidence="1">A Gly-cisPro motif from one monomer fits into the active site of the other monomer to allow specific chiral rejection of L-amino acids.</text>
</comment>
<comment type="similarity">
    <text evidence="1">Belongs to the DTD family.</text>
</comment>
<comment type="sequence caution" evidence="2">
    <conflict type="erroneous initiation">
        <sequence resource="EMBL-CDS" id="ABF43502"/>
    </conflict>
    <text>Truncated N-terminus.</text>
</comment>
<dbReference type="EC" id="3.1.1.96" evidence="1"/>
<dbReference type="EMBL" id="CP000360">
    <property type="protein sequence ID" value="ABF43502.1"/>
    <property type="status" value="ALT_INIT"/>
    <property type="molecule type" value="Genomic_DNA"/>
</dbReference>
<dbReference type="RefSeq" id="WP_041856035.1">
    <property type="nucleotide sequence ID" value="NC_008009.1"/>
</dbReference>
<dbReference type="SMR" id="Q1IHZ8"/>
<dbReference type="STRING" id="204669.Acid345_4502"/>
<dbReference type="EnsemblBacteria" id="ABF43502">
    <property type="protein sequence ID" value="ABF43502"/>
    <property type="gene ID" value="Acid345_4502"/>
</dbReference>
<dbReference type="KEGG" id="aba:Acid345_4502"/>
<dbReference type="eggNOG" id="COG1490">
    <property type="taxonomic scope" value="Bacteria"/>
</dbReference>
<dbReference type="HOGENOM" id="CLU_076901_1_0_0"/>
<dbReference type="OrthoDB" id="9801395at2"/>
<dbReference type="Proteomes" id="UP000002432">
    <property type="component" value="Chromosome"/>
</dbReference>
<dbReference type="GO" id="GO:0005737">
    <property type="term" value="C:cytoplasm"/>
    <property type="evidence" value="ECO:0007669"/>
    <property type="project" value="UniProtKB-SubCell"/>
</dbReference>
<dbReference type="GO" id="GO:0051500">
    <property type="term" value="F:D-tyrosyl-tRNA(Tyr) deacylase activity"/>
    <property type="evidence" value="ECO:0007669"/>
    <property type="project" value="TreeGrafter"/>
</dbReference>
<dbReference type="GO" id="GO:0106026">
    <property type="term" value="F:Gly-tRNA(Ala) deacylase activity"/>
    <property type="evidence" value="ECO:0007669"/>
    <property type="project" value="UniProtKB-UniRule"/>
</dbReference>
<dbReference type="GO" id="GO:0043908">
    <property type="term" value="F:Ser(Gly)-tRNA(Ala) hydrolase activity"/>
    <property type="evidence" value="ECO:0007669"/>
    <property type="project" value="UniProtKB-UniRule"/>
</dbReference>
<dbReference type="GO" id="GO:0000049">
    <property type="term" value="F:tRNA binding"/>
    <property type="evidence" value="ECO:0007669"/>
    <property type="project" value="UniProtKB-UniRule"/>
</dbReference>
<dbReference type="GO" id="GO:0019478">
    <property type="term" value="P:D-amino acid catabolic process"/>
    <property type="evidence" value="ECO:0007669"/>
    <property type="project" value="UniProtKB-UniRule"/>
</dbReference>
<dbReference type="CDD" id="cd00563">
    <property type="entry name" value="Dtyr_deacylase"/>
    <property type="match status" value="1"/>
</dbReference>
<dbReference type="FunFam" id="3.50.80.10:FF:000001">
    <property type="entry name" value="D-aminoacyl-tRNA deacylase"/>
    <property type="match status" value="1"/>
</dbReference>
<dbReference type="Gene3D" id="3.50.80.10">
    <property type="entry name" value="D-tyrosyl-tRNA(Tyr) deacylase"/>
    <property type="match status" value="1"/>
</dbReference>
<dbReference type="HAMAP" id="MF_00518">
    <property type="entry name" value="Deacylase_Dtd"/>
    <property type="match status" value="1"/>
</dbReference>
<dbReference type="InterPro" id="IPR003732">
    <property type="entry name" value="Daa-tRNA_deacyls_DTD"/>
</dbReference>
<dbReference type="InterPro" id="IPR023509">
    <property type="entry name" value="DTD-like_sf"/>
</dbReference>
<dbReference type="NCBIfam" id="TIGR00256">
    <property type="entry name" value="D-aminoacyl-tRNA deacylase"/>
    <property type="match status" value="1"/>
</dbReference>
<dbReference type="PANTHER" id="PTHR10472:SF5">
    <property type="entry name" value="D-AMINOACYL-TRNA DEACYLASE 1"/>
    <property type="match status" value="1"/>
</dbReference>
<dbReference type="PANTHER" id="PTHR10472">
    <property type="entry name" value="D-TYROSYL-TRNA TYR DEACYLASE"/>
    <property type="match status" value="1"/>
</dbReference>
<dbReference type="Pfam" id="PF02580">
    <property type="entry name" value="Tyr_Deacylase"/>
    <property type="match status" value="1"/>
</dbReference>
<dbReference type="SUPFAM" id="SSF69500">
    <property type="entry name" value="DTD-like"/>
    <property type="match status" value="1"/>
</dbReference>
<reference key="1">
    <citation type="journal article" date="2009" name="Appl. Environ. Microbiol.">
        <title>Three genomes from the phylum Acidobacteria provide insight into the lifestyles of these microorganisms in soils.</title>
        <authorList>
            <person name="Ward N.L."/>
            <person name="Challacombe J.F."/>
            <person name="Janssen P.H."/>
            <person name="Henrissat B."/>
            <person name="Coutinho P.M."/>
            <person name="Wu M."/>
            <person name="Xie G."/>
            <person name="Haft D.H."/>
            <person name="Sait M."/>
            <person name="Badger J."/>
            <person name="Barabote R.D."/>
            <person name="Bradley B."/>
            <person name="Brettin T.S."/>
            <person name="Brinkac L.M."/>
            <person name="Bruce D."/>
            <person name="Creasy T."/>
            <person name="Daugherty S.C."/>
            <person name="Davidsen T.M."/>
            <person name="DeBoy R.T."/>
            <person name="Detter J.C."/>
            <person name="Dodson R.J."/>
            <person name="Durkin A.S."/>
            <person name="Ganapathy A."/>
            <person name="Gwinn-Giglio M."/>
            <person name="Han C.S."/>
            <person name="Khouri H."/>
            <person name="Kiss H."/>
            <person name="Kothari S.P."/>
            <person name="Madupu R."/>
            <person name="Nelson K.E."/>
            <person name="Nelson W.C."/>
            <person name="Paulsen I."/>
            <person name="Penn K."/>
            <person name="Ren Q."/>
            <person name="Rosovitz M.J."/>
            <person name="Selengut J.D."/>
            <person name="Shrivastava S."/>
            <person name="Sullivan S.A."/>
            <person name="Tapia R."/>
            <person name="Thompson L.S."/>
            <person name="Watkins K.L."/>
            <person name="Yang Q."/>
            <person name="Yu C."/>
            <person name="Zafar N."/>
            <person name="Zhou L."/>
            <person name="Kuske C.R."/>
        </authorList>
    </citation>
    <scope>NUCLEOTIDE SEQUENCE [LARGE SCALE GENOMIC DNA]</scope>
    <source>
        <strain>Ellin345</strain>
    </source>
</reference>